<reference key="1">
    <citation type="journal article" date="2001" name="J. Cell Biol.">
        <title>Human Vam6p promotes lysosome clustering and fusion in vivo.</title>
        <authorList>
            <person name="Caplan S."/>
            <person name="Hartnell L.M."/>
            <person name="Aguilar R.C."/>
            <person name="Naslavsky N."/>
            <person name="Bonifacino J.S."/>
        </authorList>
    </citation>
    <scope>NUCLEOTIDE SEQUENCE [GENOMIC DNA / MRNA] (ISOFORM 1)</scope>
    <scope>FUNCTION</scope>
    <scope>HOMOOLIGOMERIZATION</scope>
    <scope>SUBCELLULAR LOCATION</scope>
    <scope>TISSUE SPECIFICITY</scope>
    <source>
        <tissue>Brain</tissue>
    </source>
</reference>
<reference key="2">
    <citation type="submission" date="2000-06" db="EMBL/GenBank/DDBJ databases">
        <title>A human homolog of yeast Vps39.</title>
        <authorList>
            <person name="Dell'Angelica E.C."/>
        </authorList>
    </citation>
    <scope>NUCLEOTIDE SEQUENCE [MRNA] (ISOFORM 2)</scope>
</reference>
<reference key="3">
    <citation type="journal article" date="1998" name="DNA Res.">
        <title>Prediction of the coding sequences of unidentified human genes. XI. The complete sequences of 100 new cDNA clones from brain which code for large proteins in vitro.</title>
        <authorList>
            <person name="Nagase T."/>
            <person name="Ishikawa K."/>
            <person name="Suyama M."/>
            <person name="Kikuno R."/>
            <person name="Miyajima N."/>
            <person name="Tanaka A."/>
            <person name="Kotani H."/>
            <person name="Nomura N."/>
            <person name="Ohara O."/>
        </authorList>
    </citation>
    <scope>NUCLEOTIDE SEQUENCE [LARGE SCALE MRNA] (ISOFORM 2)</scope>
    <source>
        <tissue>Brain</tissue>
    </source>
</reference>
<reference key="4">
    <citation type="journal article" date="2002" name="DNA Res.">
        <title>Construction of expression-ready cDNA clones for KIAA genes: manual curation of 330 KIAA cDNA clones.</title>
        <authorList>
            <person name="Nakajima D."/>
            <person name="Okazaki N."/>
            <person name="Yamakawa H."/>
            <person name="Kikuno R."/>
            <person name="Ohara O."/>
            <person name="Nagase T."/>
        </authorList>
    </citation>
    <scope>SEQUENCE REVISION</scope>
</reference>
<reference key="5">
    <citation type="journal article" date="2007" name="BMC Genomics">
        <title>The full-ORF clone resource of the German cDNA consortium.</title>
        <authorList>
            <person name="Bechtel S."/>
            <person name="Rosenfelder H."/>
            <person name="Duda A."/>
            <person name="Schmidt C.P."/>
            <person name="Ernst U."/>
            <person name="Wellenreuther R."/>
            <person name="Mehrle A."/>
            <person name="Schuster C."/>
            <person name="Bahr A."/>
            <person name="Bloecker H."/>
            <person name="Heubner D."/>
            <person name="Hoerlein A."/>
            <person name="Michel G."/>
            <person name="Wedler H."/>
            <person name="Koehrer K."/>
            <person name="Ottenwaelder B."/>
            <person name="Poustka A."/>
            <person name="Wiemann S."/>
            <person name="Schupp I."/>
        </authorList>
    </citation>
    <scope>NUCLEOTIDE SEQUENCE [LARGE SCALE MRNA] (ISOFORM 2)</scope>
    <source>
        <tissue>Endometrial tumor</tissue>
    </source>
</reference>
<reference key="6">
    <citation type="journal article" date="2006" name="Nature">
        <title>Analysis of the DNA sequence and duplication history of human chromosome 15.</title>
        <authorList>
            <person name="Zody M.C."/>
            <person name="Garber M."/>
            <person name="Sharpe T."/>
            <person name="Young S.K."/>
            <person name="Rowen L."/>
            <person name="O'Neill K."/>
            <person name="Whittaker C.A."/>
            <person name="Kamal M."/>
            <person name="Chang J.L."/>
            <person name="Cuomo C.A."/>
            <person name="Dewar K."/>
            <person name="FitzGerald M.G."/>
            <person name="Kodira C.D."/>
            <person name="Madan A."/>
            <person name="Qin S."/>
            <person name="Yang X."/>
            <person name="Abbasi N."/>
            <person name="Abouelleil A."/>
            <person name="Arachchi H.M."/>
            <person name="Baradarani L."/>
            <person name="Birditt B."/>
            <person name="Bloom S."/>
            <person name="Bloom T."/>
            <person name="Borowsky M.L."/>
            <person name="Burke J."/>
            <person name="Butler J."/>
            <person name="Cook A."/>
            <person name="DeArellano K."/>
            <person name="DeCaprio D."/>
            <person name="Dorris L. III"/>
            <person name="Dors M."/>
            <person name="Eichler E.E."/>
            <person name="Engels R."/>
            <person name="Fahey J."/>
            <person name="Fleetwood P."/>
            <person name="Friedman C."/>
            <person name="Gearin G."/>
            <person name="Hall J.L."/>
            <person name="Hensley G."/>
            <person name="Johnson E."/>
            <person name="Jones C."/>
            <person name="Kamat A."/>
            <person name="Kaur A."/>
            <person name="Locke D.P."/>
            <person name="Madan A."/>
            <person name="Munson G."/>
            <person name="Jaffe D.B."/>
            <person name="Lui A."/>
            <person name="Macdonald P."/>
            <person name="Mauceli E."/>
            <person name="Naylor J.W."/>
            <person name="Nesbitt R."/>
            <person name="Nicol R."/>
            <person name="O'Leary S.B."/>
            <person name="Ratcliffe A."/>
            <person name="Rounsley S."/>
            <person name="She X."/>
            <person name="Sneddon K.M.B."/>
            <person name="Stewart S."/>
            <person name="Sougnez C."/>
            <person name="Stone S.M."/>
            <person name="Topham K."/>
            <person name="Vincent D."/>
            <person name="Wang S."/>
            <person name="Zimmer A.R."/>
            <person name="Birren B.W."/>
            <person name="Hood L."/>
            <person name="Lander E.S."/>
            <person name="Nusbaum C."/>
        </authorList>
    </citation>
    <scope>NUCLEOTIDE SEQUENCE [LARGE SCALE GENOMIC DNA]</scope>
</reference>
<reference key="7">
    <citation type="submission" date="2005-07" db="EMBL/GenBank/DDBJ databases">
        <authorList>
            <person name="Mural R.J."/>
            <person name="Istrail S."/>
            <person name="Sutton G.G."/>
            <person name="Florea L."/>
            <person name="Halpern A.L."/>
            <person name="Mobarry C.M."/>
            <person name="Lippert R."/>
            <person name="Walenz B."/>
            <person name="Shatkay H."/>
            <person name="Dew I."/>
            <person name="Miller J.R."/>
            <person name="Flanigan M.J."/>
            <person name="Edwards N.J."/>
            <person name="Bolanos R."/>
            <person name="Fasulo D."/>
            <person name="Halldorsson B.V."/>
            <person name="Hannenhalli S."/>
            <person name="Turner R."/>
            <person name="Yooseph S."/>
            <person name="Lu F."/>
            <person name="Nusskern D.R."/>
            <person name="Shue B.C."/>
            <person name="Zheng X.H."/>
            <person name="Zhong F."/>
            <person name="Delcher A.L."/>
            <person name="Huson D.H."/>
            <person name="Kravitz S.A."/>
            <person name="Mouchard L."/>
            <person name="Reinert K."/>
            <person name="Remington K.A."/>
            <person name="Clark A.G."/>
            <person name="Waterman M.S."/>
            <person name="Eichler E.E."/>
            <person name="Adams M.D."/>
            <person name="Hunkapiller M.W."/>
            <person name="Myers E.W."/>
            <person name="Venter J.C."/>
        </authorList>
    </citation>
    <scope>NUCLEOTIDE SEQUENCE [LARGE SCALE GENOMIC DNA]</scope>
</reference>
<reference key="8">
    <citation type="journal article" date="2004" name="Genome Res.">
        <title>The status, quality, and expansion of the NIH full-length cDNA project: the Mammalian Gene Collection (MGC).</title>
        <authorList>
            <consortium name="The MGC Project Team"/>
        </authorList>
    </citation>
    <scope>NUCLEOTIDE SEQUENCE [LARGE SCALE MRNA] (ISOFORM 2)</scope>
    <scope>NUCLEOTIDE SEQUENCE [LARGE SCALE MRNA] OF 101-886 (ISOFORMS 1/2)</scope>
    <source>
        <tissue>Lung</tissue>
        <tissue>Testis</tissue>
    </source>
</reference>
<reference key="9">
    <citation type="journal article" date="2003" name="EMBO J.">
        <title>TLP, a novel modulator of TGF-beta signaling, has opposite effects on Smad2- and Smad3-dependent signaling.</title>
        <authorList>
            <person name="Felici A."/>
            <person name="Wurthner J.U."/>
            <person name="Parks W.T."/>
            <person name="Giam L.R."/>
            <person name="Reiss M."/>
            <person name="Karpova T.S."/>
            <person name="McNally J.G."/>
            <person name="Roberts A.B."/>
        </authorList>
    </citation>
    <scope>FUNCTION</scope>
    <scope>INTERACTION WITH ACVR2B; SMAD4; TGFBR1 AND TGFBR2</scope>
    <scope>SUBCELLULAR LOCATION</scope>
    <scope>TISSUE SPECIFICITY</scope>
</reference>
<reference key="10">
    <citation type="journal article" date="2007" name="Traffic">
        <title>Integral and associated lysosomal membrane proteins.</title>
        <authorList>
            <person name="Schroeder B."/>
            <person name="Wrocklage C."/>
            <person name="Pan C."/>
            <person name="Jaeger R."/>
            <person name="Koesters B."/>
            <person name="Schaefer H."/>
            <person name="Elsaesser H.-P."/>
            <person name="Mann M."/>
            <person name="Hasilik A."/>
        </authorList>
    </citation>
    <scope>SUBCELLULAR LOCATION [LARGE SCALE ANALYSIS]</scope>
    <source>
        <tissue>Placenta</tissue>
    </source>
</reference>
<reference key="11">
    <citation type="journal article" date="2013" name="FEBS J.">
        <title>Tethering complexes in the endocytic pathway: CORVET and HOPS.</title>
        <authorList>
            <person name="Solinger J.A."/>
            <person name="Spang A."/>
        </authorList>
    </citation>
    <scope>REVIEW ON THE HOPS AND CORVET COMPLEXES</scope>
</reference>
<reference key="12">
    <citation type="journal article" date="2013" name="Proc. Natl. Acad. Sci. U.S.A.">
        <title>Structural basis of Vps33A recruitment to the human HOPS complex by Vps16.</title>
        <authorList>
            <person name="Graham S.C."/>
            <person name="Wartosch L."/>
            <person name="Gray S.R."/>
            <person name="Scourfield E.J."/>
            <person name="Deane J.E."/>
            <person name="Luzio J.P."/>
            <person name="Owen D.J."/>
        </authorList>
    </citation>
    <scope>INTERACTION WITH VPS11</scope>
</reference>
<reference key="13">
    <citation type="journal article" date="2013" name="Traffic">
        <title>The HOPS proteins hVps41 and hVps39 are required for homotypic and heterotypic late endosome fusion.</title>
        <authorList>
            <person name="Pols M.S."/>
            <person name="ten Brink C."/>
            <person name="Gosavi P."/>
            <person name="Oorschot V."/>
            <person name="Klumperman J."/>
        </authorList>
    </citation>
    <scope>FUNCTION</scope>
    <scope>SUBCELLULAR LOCATION</scope>
</reference>
<reference key="14">
    <citation type="journal article" date="2015" name="J. Cell Sci.">
        <title>The small GTPase Arl8b regulates assembly of the mammalian HOPS complex on lysosomes.</title>
        <authorList>
            <person name="Khatter D."/>
            <person name="Raina V.B."/>
            <person name="Dwivedi D."/>
            <person name="Sindhwani A."/>
            <person name="Bahl S."/>
            <person name="Sharma M."/>
        </authorList>
    </citation>
    <scope>SUBUNIT</scope>
    <scope>INTERACTION WITH PLEKHM2</scope>
</reference>
<reference key="15">
    <citation type="journal article" date="2015" name="Traffic">
        <title>Recruitment of VPS33A to HOPS by VPS16 Is Required for Lysosome Fusion with Endosomes and Autophagosomes.</title>
        <authorList>
            <person name="Wartosch L."/>
            <person name="Guenesdogan U."/>
            <person name="Graham S.C."/>
            <person name="Luzio J.P."/>
        </authorList>
    </citation>
    <scope>FUNCTION</scope>
    <scope>FUNCTION OF THE HOPS COMPLEX</scope>
</reference>
<reference key="16">
    <citation type="journal article" date="2019" name="Mol. Cell">
        <title>The ER-Localized Transmembrane Protein TMEM39A/SUSR2 Regulates Autophagy by Controlling the Trafficking of the PtdIns(4)P Phosphatase SAC1.</title>
        <authorList>
            <person name="Miao G."/>
            <person name="Zhang Y."/>
            <person name="Chen D."/>
            <person name="Zhang H."/>
        </authorList>
    </citation>
    <scope>INTERACTION WITH STX17</scope>
</reference>
<reference key="17">
    <citation type="journal article" date="2020" name="Dev. Cell">
        <title>ORF3a of the COVID-19 virus SARS-CoV-2 blocks HOPS complex-mediated assembly of the SNARE complex required for autolysosome formation.</title>
        <authorList>
            <person name="Miao G."/>
            <person name="Zhao H."/>
            <person name="Li Y."/>
            <person name="Ji M."/>
            <person name="Chen Y."/>
            <person name="Shi Y."/>
            <person name="Bi Y."/>
            <person name="Wang P."/>
            <person name="Zhang H."/>
        </authorList>
    </citation>
    <scope>FUNCTION</scope>
    <scope>INTERACTION WITH SARS-COV-2 ORF3A PROTEIN (MICROBIAL INFECTION)</scope>
</reference>
<reference key="18">
    <citation type="journal article" date="2023" name="Nat. Commun.">
        <title>C9orf72-catalyzed GTP loading of Rab39A enables HOPS-mediated membrane tethering and fusion in mammalian autophagy.</title>
        <authorList>
            <person name="Zhang S."/>
            <person name="Tong M."/>
            <person name="Zheng D."/>
            <person name="Huang H."/>
            <person name="Li L."/>
            <person name="Ungermann C."/>
            <person name="Pan Y."/>
            <person name="Luo H."/>
            <person name="Lei M."/>
            <person name="Tang Z."/>
            <person name="Fu W."/>
            <person name="Chen S."/>
            <person name="Liu X."/>
            <person name="Zhong Q."/>
        </authorList>
    </citation>
    <scope>FUNCTION</scope>
    <scope>INTERACTION WITH RAB2A; RAB39A AND RAB39B</scope>
</reference>
<feature type="chain" id="PRO_0000065901" description="Vam6/Vps39-like protein">
    <location>
        <begin position="1"/>
        <end position="886"/>
    </location>
</feature>
<feature type="domain" description="CNH" evidence="2">
    <location>
        <begin position="15"/>
        <end position="294"/>
    </location>
</feature>
<feature type="repeat" description="CHCR">
    <location>
        <begin position="573"/>
        <end position="750"/>
    </location>
</feature>
<feature type="splice variant" id="VSP_004075" description="In isoform 2." evidence="13 14 15 16">
    <original>VPADVASPESGS</original>
    <variation>G</variation>
    <location>
        <begin position="47"/>
        <end position="58"/>
    </location>
</feature>
<feature type="sequence conflict" description="In Ref. 1; AAK72222." evidence="17" ref="1">
    <original>R</original>
    <variation>Q</variation>
    <location>
        <position position="135"/>
    </location>
</feature>
<feature type="sequence conflict" description="In Ref. 5; CAD97646." evidence="17" ref="5">
    <original>D</original>
    <variation>G</variation>
    <location>
        <position position="191"/>
    </location>
</feature>
<feature type="sequence conflict" description="In Ref. 5; CAD97646." evidence="17" ref="5">
    <original>I</original>
    <variation>T</variation>
    <location>
        <position position="846"/>
    </location>
</feature>
<feature type="strand" evidence="22">
    <location>
        <begin position="851"/>
        <end position="858"/>
    </location>
</feature>
<feature type="strand" evidence="22">
    <location>
        <begin position="865"/>
        <end position="867"/>
    </location>
</feature>
<feature type="strand" evidence="22">
    <location>
        <begin position="871"/>
        <end position="877"/>
    </location>
</feature>
<feature type="helix" evidence="22">
    <location>
        <begin position="883"/>
        <end position="885"/>
    </location>
</feature>
<evidence type="ECO:0000250" key="1">
    <source>
        <dbReference type="UniProtKB" id="Q8R5L3"/>
    </source>
</evidence>
<evidence type="ECO:0000255" key="2">
    <source>
        <dbReference type="PROSITE-ProRule" id="PRU00795"/>
    </source>
</evidence>
<evidence type="ECO:0000269" key="3">
    <source>
    </source>
</evidence>
<evidence type="ECO:0000269" key="4">
    <source>
    </source>
</evidence>
<evidence type="ECO:0000269" key="5">
    <source>
    </source>
</evidence>
<evidence type="ECO:0000269" key="6">
    <source>
    </source>
</evidence>
<evidence type="ECO:0000269" key="7">
    <source>
    </source>
</evidence>
<evidence type="ECO:0000269" key="8">
    <source>
    </source>
</evidence>
<evidence type="ECO:0000269" key="9">
    <source>
    </source>
</evidence>
<evidence type="ECO:0000269" key="10">
    <source>
    </source>
</evidence>
<evidence type="ECO:0000269" key="11">
    <source>
    </source>
</evidence>
<evidence type="ECO:0000269" key="12">
    <source>
    </source>
</evidence>
<evidence type="ECO:0000303" key="13">
    <source>
    </source>
</evidence>
<evidence type="ECO:0000303" key="14">
    <source>
    </source>
</evidence>
<evidence type="ECO:0000303" key="15">
    <source>
    </source>
</evidence>
<evidence type="ECO:0000303" key="16">
    <source ref="2"/>
</evidence>
<evidence type="ECO:0000305" key="17"/>
<evidence type="ECO:0000305" key="18">
    <source>
    </source>
</evidence>
<evidence type="ECO:0000305" key="19">
    <source>
    </source>
</evidence>
<evidence type="ECO:0000305" key="20">
    <source>
    </source>
</evidence>
<evidence type="ECO:0000312" key="21">
    <source>
        <dbReference type="HGNC" id="HGNC:20593"/>
    </source>
</evidence>
<evidence type="ECO:0007829" key="22">
    <source>
        <dbReference type="PDB" id="6ZE9"/>
    </source>
</evidence>
<keyword id="KW-0002">3D-structure</keyword>
<keyword id="KW-0025">Alternative splicing</keyword>
<keyword id="KW-0072">Autophagy</keyword>
<keyword id="KW-0963">Cytoplasm</keyword>
<keyword id="KW-0967">Endosome</keyword>
<keyword id="KW-0945">Host-virus interaction</keyword>
<keyword id="KW-0458">Lysosome</keyword>
<keyword id="KW-0472">Membrane</keyword>
<keyword id="KW-0653">Protein transport</keyword>
<keyword id="KW-1267">Proteomics identification</keyword>
<keyword id="KW-1185">Reference proteome</keyword>
<keyword id="KW-0813">Transport</keyword>
<protein>
    <recommendedName>
        <fullName evidence="17">Vam6/Vps39-like protein</fullName>
    </recommendedName>
    <alternativeName>
        <fullName>TRAP1-like protein</fullName>
        <shortName>hVam6p</shortName>
    </alternativeName>
</protein>
<gene>
    <name evidence="21" type="primary">VPS39</name>
    <name type="synonym">KIAA0770</name>
    <name type="synonym">TLP</name>
    <name type="synonym">VAM6</name>
</gene>
<organism>
    <name type="scientific">Homo sapiens</name>
    <name type="common">Human</name>
    <dbReference type="NCBI Taxonomy" id="9606"/>
    <lineage>
        <taxon>Eukaryota</taxon>
        <taxon>Metazoa</taxon>
        <taxon>Chordata</taxon>
        <taxon>Craniata</taxon>
        <taxon>Vertebrata</taxon>
        <taxon>Euteleostomi</taxon>
        <taxon>Mammalia</taxon>
        <taxon>Eutheria</taxon>
        <taxon>Euarchontoglires</taxon>
        <taxon>Primates</taxon>
        <taxon>Haplorrhini</taxon>
        <taxon>Catarrhini</taxon>
        <taxon>Hominidae</taxon>
        <taxon>Homo</taxon>
    </lineage>
</organism>
<accession>Q96JC1</accession>
<accession>O94869</accession>
<accession>Q71SQ6</accession>
<accession>Q7Z3V3</accession>
<accession>Q96B93</accession>
<accession>Q96RM0</accession>
<proteinExistence type="evidence at protein level"/>
<comment type="function">
    <text evidence="4">Regulator of TGF-beta/activin signaling, inhibiting SMAD3- and activating SMAD2-dependent transcription. Acts by interfering with SMAD3/SMAD4 complex formation, this would lead to inhibition of SMAD3-dependent transcription and relieve SMAD3 inhibition of SMAD2-dependent promoters, thus increasing SMAD2-dependent transcription. Does not affect TGF-beta-induced SMAD2 or SMAD3 phosphorylation, nor SMAD2/SMAD4 complex formation.</text>
</comment>
<comment type="function">
    <text evidence="3 6 8 11 12 19">Plays a role in vesicle-mediated protein trafficking to lysosomal compartments including the endocytic membrane transport and autophagic pathways. Acts as a component of the HOPS endosomal tethering complex. This complex is proposed to be involved in the Rab5-to-Rab7 endosome conversion probably implicating MON1A/B, and via binding SNAREs and SNARE complexes to mediate tethering and docking events during SNARE-mediated membrane fusion. The HOPS complex is proposed to be recruited to Rab7 on the late endosomal membrane and to regulate late endocytic, phagocytic and autophagic traffic towards lysosomes (PubMed:23351085). Involved in homotypic vesicle fusions between late endosomes and in heterotypic fusions between late endosomes and lysosomes (PubMed:11448994, PubMed:23167963, PubMed:23351085). Required for fusion of endosomes and autophagosomes with lysosomes (PubMed:25783203, PubMed:37821429).</text>
</comment>
<comment type="subunit">
    <text evidence="1 3 4 7 9 10 11 12 19 20">Homooligomer (PubMed:11448994). Interacts with TGFBR2 and, less efficiently, with TGFBR1; interaction with TGFBR2 is independent of the receptor kinase activity and of the presence of TGF-beta. Also interacts with ACVR2B, but not with BMPR2. Interacts with SMAD4, preferentially following TGF-beta treatment. Does not interact with SAMD2 or SMAD3 (PubMed:12941698). Component of the homotypic fusion and vacuole protein sorting (HOPS) complex; the core of which composed of the class C Vps proteins VPS11, VPS16, VPS18 and VPS33A, is associated with VPS39 and VPS41 (PubMed:23351085, PubMed:23901104, PubMed:25908847, PubMed:33422265). Interacts with PLEKHM2; involved in VPS39 recruitment to ARL8B-containing lysosomes (PubMed:25908847). Associates with adapter protein complex 3 (AP-3) and clathrin:AP-3 complexes (By similarity). Interacts with STX17; this interaction is increased in the absence of TMEM39A (PubMed:31806350). Interacts with RAB7, RAB2A and RAB2B (By similarity). Interacts with RAB2A (GTP-bound); the interaction contributes to obtaining a functional HOPS complex that promotes autophagosome-lysosome membrane fusion driven by STX17-SNAP29-VAMP8 (PubMed:37821429). Interacts with RAB39A (GTP-bound) and RAB39B (GTP-bound); interaction with RAB39A contributes to obtaining a functional HOPS complex (PubMed:37821429).</text>
</comment>
<comment type="subunit">
    <text evidence="6 11">(Microbial infection) Interacts with SARS coronavirus-2/SARS-CoV-2 ORF3A protein; the interaction is direct and sequestrates VPS39, thereby preventing HOPS complex from interacting with the autophagosomal SNARE protein STX17 (PubMed:33422265). ORF3A enhances the interaction of VPS39 with VPS11 and VPS18, while its interaction with the VPS16:VPS33A module is attenuated (PubMed:23167963).</text>
</comment>
<comment type="interaction">
    <interactant intactId="EBI-1050197">
        <id>Q96JC1</id>
    </interactant>
    <interactant intactId="EBI-473814">
        <id>Q9Y4G2</id>
        <label>PLEKHM1</label>
    </interactant>
    <organismsDiffer>false</organismsDiffer>
    <experiments>5</experiments>
</comment>
<comment type="interaction">
    <interactant intactId="EBI-1050197">
        <id>Q96JC1</id>
    </interactant>
    <interactant intactId="EBI-1056089">
        <id>P51149</id>
        <label>RAB7A</label>
    </interactant>
    <organismsDiffer>false</organismsDiffer>
    <experiments>2</experiments>
</comment>
<comment type="interaction">
    <interactant intactId="EBI-1050197">
        <id>Q96JC1</id>
    </interactant>
    <interactant intactId="EBI-2797775">
        <id>P56962</id>
        <label>STX17</label>
    </interactant>
    <organismsDiffer>false</organismsDiffer>
    <experiments>2</experiments>
</comment>
<comment type="interaction">
    <interactant intactId="EBI-1050197">
        <id>Q96JC1</id>
    </interactant>
    <interactant intactId="EBI-373380">
        <id>Q9H270</id>
        <label>VPS11</label>
    </interactant>
    <organismsDiffer>false</organismsDiffer>
    <experiments>5</experiments>
</comment>
<comment type="interaction">
    <interactant intactId="EBI-1050197">
        <id>Q96JC1</id>
    </interactant>
    <interactant intactId="EBI-1053363">
        <id>Q9P253</id>
        <label>VPS18</label>
    </interactant>
    <organismsDiffer>false</organismsDiffer>
    <experiments>2</experiments>
</comment>
<comment type="interaction">
    <interactant intactId="EBI-1050197">
        <id>Q96JC1</id>
    </interactant>
    <interactant intactId="EBI-25475894">
        <id>P0DTC3</id>
        <label>3a</label>
    </interactant>
    <organismsDiffer>true</organismsDiffer>
    <experiments>19</experiments>
</comment>
<comment type="interaction">
    <interactant intactId="EBI-11962886">
        <id>Q96JC1-2</id>
    </interactant>
    <interactant intactId="EBI-1105213">
        <id>Q9UBB9</id>
        <label>TFIP11</label>
    </interactant>
    <organismsDiffer>false</organismsDiffer>
    <experiments>3</experiments>
</comment>
<comment type="interaction">
    <interactant intactId="EBI-11962886">
        <id>Q96JC1-2</id>
    </interactant>
    <interactant intactId="EBI-373380">
        <id>Q9H270</id>
        <label>VPS11</label>
    </interactant>
    <organismsDiffer>false</organismsDiffer>
    <experiments>4</experiments>
</comment>
<comment type="subcellular location">
    <subcellularLocation>
        <location>Cytoplasm</location>
    </subcellularLocation>
    <subcellularLocation>
        <location evidence="3 5 6">Lysosome membrane</location>
        <topology evidence="18">Peripheral membrane protein</topology>
    </subcellularLocation>
    <subcellularLocation>
        <location evidence="3 6">Late endosome membrane</location>
        <topology evidence="18">Peripheral membrane protein</topology>
    </subcellularLocation>
    <text evidence="4">Colocalizes with TGFBR1 and TGFBR2 in cytoplasmic vesicular structures and most prominently in cortical vesicles.</text>
</comment>
<comment type="subcellular location">
    <text evidence="11">(Microbial infection) Sequestrated at the late endosome by SARS coronavirus-2/SARS-CoV-2 ORF3A protein.</text>
</comment>
<comment type="alternative products">
    <event type="alternative splicing"/>
    <isoform>
        <id>Q96JC1-1</id>
        <name>1</name>
        <sequence type="displayed"/>
    </isoform>
    <isoform>
        <id>Q96JC1-2</id>
        <name>2</name>
        <sequence type="described" ref="VSP_004075"/>
    </isoform>
</comment>
<comment type="tissue specificity">
    <text evidence="3 4">Widely expressed, with highest levels in heart, skeletal muscle, kidney, pancreas, brain, placenta and spleen.</text>
</comment>
<comment type="similarity">
    <text evidence="17">Belongs to the VAM6/VPS39 family.</text>
</comment>
<comment type="sequence caution" evidence="17">
    <conflict type="erroneous initiation">
        <sequence resource="EMBL-CDS" id="BAA34490"/>
    </conflict>
    <text>Extended N-terminus.</text>
</comment>
<dbReference type="EMBL" id="AF280814">
    <property type="protein sequence ID" value="AAK72222.1"/>
    <property type="molecule type" value="mRNA"/>
</dbReference>
<dbReference type="EMBL" id="AF334400">
    <property type="protein sequence ID" value="AAK58862.1"/>
    <property type="molecule type" value="Genomic_DNA"/>
</dbReference>
<dbReference type="EMBL" id="AF281052">
    <property type="protein sequence ID" value="AAQ05978.1"/>
    <property type="molecule type" value="mRNA"/>
</dbReference>
<dbReference type="EMBL" id="AB018313">
    <property type="protein sequence ID" value="BAA34490.2"/>
    <property type="status" value="ALT_INIT"/>
    <property type="molecule type" value="mRNA"/>
</dbReference>
<dbReference type="EMBL" id="BX537404">
    <property type="protein sequence ID" value="CAD97646.1"/>
    <property type="molecule type" value="mRNA"/>
</dbReference>
<dbReference type="EMBL" id="AC036103">
    <property type="status" value="NOT_ANNOTATED_CDS"/>
    <property type="molecule type" value="Genomic_DNA"/>
</dbReference>
<dbReference type="EMBL" id="CH471125">
    <property type="protein sequence ID" value="EAW92536.1"/>
    <property type="molecule type" value="Genomic_DNA"/>
</dbReference>
<dbReference type="EMBL" id="BC015817">
    <property type="protein sequence ID" value="AAH15817.2"/>
    <property type="molecule type" value="mRNA"/>
</dbReference>
<dbReference type="EMBL" id="BC068559">
    <property type="protein sequence ID" value="AAH68559.1"/>
    <property type="molecule type" value="mRNA"/>
</dbReference>
<dbReference type="CCDS" id="CCDS10083.1">
    <molecule id="Q96JC1-2"/>
</dbReference>
<dbReference type="CCDS" id="CCDS73710.1">
    <molecule id="Q96JC1-1"/>
</dbReference>
<dbReference type="RefSeq" id="NP_001288067.1">
    <molecule id="Q96JC1-1"/>
    <property type="nucleotide sequence ID" value="NM_001301138.3"/>
</dbReference>
<dbReference type="RefSeq" id="NP_056104.2">
    <molecule id="Q96JC1-2"/>
    <property type="nucleotide sequence ID" value="NM_015289.5"/>
</dbReference>
<dbReference type="PDB" id="6ZE9">
    <property type="method" value="X-ray"/>
    <property type="resolution" value="2.90 A"/>
    <property type="chains" value="A/B/C=851-886"/>
</dbReference>
<dbReference type="PDBsum" id="6ZE9"/>
<dbReference type="SMR" id="Q96JC1"/>
<dbReference type="BioGRID" id="116925">
    <property type="interactions" value="60"/>
</dbReference>
<dbReference type="ComplexPortal" id="CPX-6212">
    <property type="entry name" value="HOPS tethering complex"/>
</dbReference>
<dbReference type="CORUM" id="Q96JC1"/>
<dbReference type="FunCoup" id="Q96JC1">
    <property type="interactions" value="2684"/>
</dbReference>
<dbReference type="IntAct" id="Q96JC1">
    <property type="interactions" value="49"/>
</dbReference>
<dbReference type="MINT" id="Q96JC1"/>
<dbReference type="STRING" id="9606.ENSP00000335193"/>
<dbReference type="GlyGen" id="Q96JC1">
    <property type="glycosylation" value="1 site, 1 O-linked glycan (1 site)"/>
</dbReference>
<dbReference type="iPTMnet" id="Q96JC1"/>
<dbReference type="PhosphoSitePlus" id="Q96JC1"/>
<dbReference type="BioMuta" id="VPS39"/>
<dbReference type="DMDM" id="66774218"/>
<dbReference type="jPOST" id="Q96JC1"/>
<dbReference type="MassIVE" id="Q96JC1"/>
<dbReference type="PaxDb" id="9606-ENSP00000335193"/>
<dbReference type="PeptideAtlas" id="Q96JC1"/>
<dbReference type="ProteomicsDB" id="76939">
    <molecule id="Q96JC1-1"/>
</dbReference>
<dbReference type="ProteomicsDB" id="76940">
    <molecule id="Q96JC1-2"/>
</dbReference>
<dbReference type="Pumba" id="Q96JC1"/>
<dbReference type="Antibodypedia" id="23540">
    <property type="antibodies" value="96 antibodies from 25 providers"/>
</dbReference>
<dbReference type="DNASU" id="23339"/>
<dbReference type="Ensembl" id="ENST00000318006.10">
    <molecule id="Q96JC1-2"/>
    <property type="protein sequence ID" value="ENSP00000326534.5"/>
    <property type="gene ID" value="ENSG00000166887.16"/>
</dbReference>
<dbReference type="Ensembl" id="ENST00000348544.4">
    <molecule id="Q96JC1-1"/>
    <property type="protein sequence ID" value="ENSP00000335193.5"/>
    <property type="gene ID" value="ENSG00000166887.16"/>
</dbReference>
<dbReference type="GeneID" id="23339"/>
<dbReference type="KEGG" id="hsa:23339"/>
<dbReference type="MANE-Select" id="ENST00000318006.10">
    <molecule id="Q96JC1-2"/>
    <property type="protein sequence ID" value="ENSP00000326534.5"/>
    <property type="RefSeq nucleotide sequence ID" value="NM_015289.5"/>
    <property type="RefSeq protein sequence ID" value="NP_056104.2"/>
</dbReference>
<dbReference type="UCSC" id="uc001zpc.4">
    <molecule id="Q96JC1-1"/>
    <property type="organism name" value="human"/>
</dbReference>
<dbReference type="AGR" id="HGNC:20593"/>
<dbReference type="CTD" id="23339"/>
<dbReference type="DisGeNET" id="23339"/>
<dbReference type="GeneCards" id="VPS39"/>
<dbReference type="HGNC" id="HGNC:20593">
    <property type="gene designation" value="VPS39"/>
</dbReference>
<dbReference type="HPA" id="ENSG00000166887">
    <property type="expression patterns" value="Low tissue specificity"/>
</dbReference>
<dbReference type="MIM" id="612188">
    <property type="type" value="gene"/>
</dbReference>
<dbReference type="neXtProt" id="NX_Q96JC1"/>
<dbReference type="OpenTargets" id="ENSG00000166887"/>
<dbReference type="PharmGKB" id="PA134945163"/>
<dbReference type="VEuPathDB" id="HostDB:ENSG00000166887"/>
<dbReference type="eggNOG" id="KOG2063">
    <property type="taxonomic scope" value="Eukaryota"/>
</dbReference>
<dbReference type="GeneTree" id="ENSGT00530000063596"/>
<dbReference type="HOGENOM" id="CLU_004190_1_1_1"/>
<dbReference type="InParanoid" id="Q96JC1"/>
<dbReference type="OMA" id="EEYCNQV"/>
<dbReference type="OrthoDB" id="5325112at2759"/>
<dbReference type="PAN-GO" id="Q96JC1">
    <property type="GO annotations" value="4 GO annotations based on evolutionary models"/>
</dbReference>
<dbReference type="PhylomeDB" id="Q96JC1"/>
<dbReference type="TreeFam" id="TF105803"/>
<dbReference type="PathwayCommons" id="Q96JC1"/>
<dbReference type="Reactome" id="R-HSA-9754560">
    <property type="pathway name" value="SARS-CoV-2 modulates autophagy"/>
</dbReference>
<dbReference type="SignaLink" id="Q96JC1"/>
<dbReference type="SIGNOR" id="Q96JC1"/>
<dbReference type="BioGRID-ORCS" id="23339">
    <property type="hits" value="123 hits in 1185 CRISPR screens"/>
</dbReference>
<dbReference type="CD-CODE" id="FB4E32DD">
    <property type="entry name" value="Presynaptic clusters and postsynaptic densities"/>
</dbReference>
<dbReference type="ChiTaRS" id="VPS39">
    <property type="organism name" value="human"/>
</dbReference>
<dbReference type="GeneWiki" id="VPS39"/>
<dbReference type="GenomeRNAi" id="23339"/>
<dbReference type="Pharos" id="Q96JC1">
    <property type="development level" value="Tbio"/>
</dbReference>
<dbReference type="PRO" id="PR:Q96JC1"/>
<dbReference type="Proteomes" id="UP000005640">
    <property type="component" value="Chromosome 15"/>
</dbReference>
<dbReference type="RNAct" id="Q96JC1">
    <property type="molecule type" value="protein"/>
</dbReference>
<dbReference type="Bgee" id="ENSG00000166887">
    <property type="expression patterns" value="Expressed in right uterine tube and 201 other cell types or tissues"/>
</dbReference>
<dbReference type="ExpressionAtlas" id="Q96JC1">
    <property type="expression patterns" value="baseline and differential"/>
</dbReference>
<dbReference type="GO" id="GO:0030123">
    <property type="term" value="C:AP-3 adaptor complex"/>
    <property type="evidence" value="ECO:0007669"/>
    <property type="project" value="Ensembl"/>
</dbReference>
<dbReference type="GO" id="GO:0005737">
    <property type="term" value="C:cytoplasm"/>
    <property type="evidence" value="ECO:0000318"/>
    <property type="project" value="GO_Central"/>
</dbReference>
<dbReference type="GO" id="GO:0010008">
    <property type="term" value="C:endosome membrane"/>
    <property type="evidence" value="ECO:0000304"/>
    <property type="project" value="Reactome"/>
</dbReference>
<dbReference type="GO" id="GO:0030897">
    <property type="term" value="C:HOPS complex"/>
    <property type="evidence" value="ECO:0000314"/>
    <property type="project" value="UniProtKB"/>
</dbReference>
<dbReference type="GO" id="GO:0005770">
    <property type="term" value="C:late endosome"/>
    <property type="evidence" value="ECO:0000314"/>
    <property type="project" value="UniProtKB"/>
</dbReference>
<dbReference type="GO" id="GO:0031902">
    <property type="term" value="C:late endosome membrane"/>
    <property type="evidence" value="ECO:0000314"/>
    <property type="project" value="UniProtKB"/>
</dbReference>
<dbReference type="GO" id="GO:1902501">
    <property type="term" value="C:lysosomal HOPS complex"/>
    <property type="evidence" value="ECO:0000314"/>
    <property type="project" value="UniProtKB"/>
</dbReference>
<dbReference type="GO" id="GO:0005765">
    <property type="term" value="C:lysosomal membrane"/>
    <property type="evidence" value="ECO:0000314"/>
    <property type="project" value="UniProtKB"/>
</dbReference>
<dbReference type="GO" id="GO:0016020">
    <property type="term" value="C:membrane"/>
    <property type="evidence" value="ECO:0000318"/>
    <property type="project" value="GO_Central"/>
</dbReference>
<dbReference type="GO" id="GO:0061909">
    <property type="term" value="P:autophagosome-lysosome fusion"/>
    <property type="evidence" value="ECO:0000314"/>
    <property type="project" value="UniProtKB"/>
</dbReference>
<dbReference type="GO" id="GO:0006914">
    <property type="term" value="P:autophagy"/>
    <property type="evidence" value="ECO:0000315"/>
    <property type="project" value="UniProtKB"/>
</dbReference>
<dbReference type="GO" id="GO:0032456">
    <property type="term" value="P:endocytic recycling"/>
    <property type="evidence" value="ECO:0000315"/>
    <property type="project" value="UniProtKB"/>
</dbReference>
<dbReference type="GO" id="GO:0034058">
    <property type="term" value="P:endosomal vesicle fusion"/>
    <property type="evidence" value="ECO:0000314"/>
    <property type="project" value="UniProtKB"/>
</dbReference>
<dbReference type="GO" id="GO:0008333">
    <property type="term" value="P:endosome to lysosome transport"/>
    <property type="evidence" value="ECO:0000315"/>
    <property type="project" value="UniProtKB"/>
</dbReference>
<dbReference type="GO" id="GO:0006886">
    <property type="term" value="P:intracellular protein transport"/>
    <property type="evidence" value="ECO:0007669"/>
    <property type="project" value="InterPro"/>
</dbReference>
<dbReference type="GO" id="GO:1902774">
    <property type="term" value="P:late endosome to lysosome transport"/>
    <property type="evidence" value="ECO:0000314"/>
    <property type="project" value="UniProtKB"/>
</dbReference>
<dbReference type="GO" id="GO:0035542">
    <property type="term" value="P:regulation of SNARE complex assembly"/>
    <property type="evidence" value="ECO:0000303"/>
    <property type="project" value="ComplexPortal"/>
</dbReference>
<dbReference type="InterPro" id="IPR000547">
    <property type="entry name" value="Clathrin_H-chain/VPS_repeat"/>
</dbReference>
<dbReference type="InterPro" id="IPR001180">
    <property type="entry name" value="CNH_dom"/>
</dbReference>
<dbReference type="InterPro" id="IPR032914">
    <property type="entry name" value="Vam6/VPS39/TRAP1"/>
</dbReference>
<dbReference type="InterPro" id="IPR019452">
    <property type="entry name" value="VPS39/TGF_beta_rcpt-assoc_1"/>
</dbReference>
<dbReference type="InterPro" id="IPR019453">
    <property type="entry name" value="VPS39/TGFA1_Znf"/>
</dbReference>
<dbReference type="PANTHER" id="PTHR12894">
    <property type="entry name" value="CNH DOMAIN CONTAINING"/>
    <property type="match status" value="1"/>
</dbReference>
<dbReference type="PANTHER" id="PTHR12894:SF49">
    <property type="entry name" value="VAM6_VPS39-LIKE PROTEIN"/>
    <property type="match status" value="1"/>
</dbReference>
<dbReference type="Pfam" id="PF00780">
    <property type="entry name" value="CNH"/>
    <property type="match status" value="1"/>
</dbReference>
<dbReference type="Pfam" id="PF10366">
    <property type="entry name" value="Vps39_1"/>
    <property type="match status" value="1"/>
</dbReference>
<dbReference type="Pfam" id="PF10367">
    <property type="entry name" value="zf-Vps39_C"/>
    <property type="match status" value="1"/>
</dbReference>
<dbReference type="SMART" id="SM00036">
    <property type="entry name" value="CNH"/>
    <property type="match status" value="1"/>
</dbReference>
<dbReference type="PROSITE" id="PS50236">
    <property type="entry name" value="CHCR"/>
    <property type="match status" value="1"/>
</dbReference>
<dbReference type="PROSITE" id="PS50219">
    <property type="entry name" value="CNH"/>
    <property type="match status" value="1"/>
</dbReference>
<sequence>MHDAFEPVPILEKLPLQIDCLAAWEEWLLVGTKQGHLLLYRIRKDVVPADVASPESGSCNRFEVTLEKSNKNFSKKIQQIHVVSQFKILVSLLENNIYVHDLLTFQQITTVSKAKGASLFTCDLQHTETGEEVLRMCVAVKKKLQLYFWKDREFHELQGDFSVPDVPKSMAWCENSICVGFKRDYYLIRVDGKGSIKELFPTGKQLEPLVAPLADGKVAVGQDDLTVVLNEEGICTQKCALNWTDIPVAMEHQPPYIIAVLPRYVEIRTFEPRLLVQSIELQRPRFITSGGSNIIYVASNHFVWRLIPVPMATQIQQLLQDKQFELALQLAEMKDDSDSEKQQQIHHIKNLYAFNLFCQKRFDESMQVFAKLGTDPTHVMGLYPDLLPTDYRKQLQYPNPLPVLSGAELEKAHLALIDYLTQKRSQLVKKLNDSDHQSSTSPLMEGTPTIKSKKKLLQIIDTTLLKCYLHTNVALVAPLLRLENNHCHIEESEHVLKKAHKYSELIILYEKKGLHEKALQVLVDQSKKANSPLKGHERTVQYLQHLGTENLHLIFSYSVWVLRDFPEDGLKIFTEDLPEVESLPRDRVLGFLIENFKGLAIPYLEHIIHVWEETGSRFHNCLIQLYCEKVQGLMKEYLLSFPAGKTPVPAGEEEGELGEYRQKLLMFLEISSYYDPGRLICDFPFDGLLEERALLLGRMGKHEQALFIYVHILKDTRMAEEYCHKHYDRNKDGNKDVYLSLLRMYLSPPSIHCLGPIKLELLEPKANLQAALQVLELHHSKLDTTKALNLLPANTQINDIRIFLEKVLEENAQKKRFNQVLKNLLHAEFLRVQEERILHQQVKCIITEEKVCMVCKKKIGNSAFARYPNGVVVHYFCSKEVNPADT</sequence>
<name>VPS39_HUMAN</name>